<comment type="function">
    <text evidence="1">Could methylate the ribose at the nucleotide 34 wobble position in tRNA.</text>
</comment>
<comment type="catalytic activity">
    <reaction evidence="1">
        <text>cytidine(34) in tRNA + S-adenosyl-L-methionine = 2'-O-methylcytidine(34) in tRNA + S-adenosyl-L-homocysteine + H(+)</text>
        <dbReference type="Rhea" id="RHEA:43084"/>
        <dbReference type="Rhea" id="RHEA-COMP:10331"/>
        <dbReference type="Rhea" id="RHEA-COMP:10332"/>
        <dbReference type="ChEBI" id="CHEBI:15378"/>
        <dbReference type="ChEBI" id="CHEBI:57856"/>
        <dbReference type="ChEBI" id="CHEBI:59789"/>
        <dbReference type="ChEBI" id="CHEBI:74495"/>
        <dbReference type="ChEBI" id="CHEBI:82748"/>
        <dbReference type="EC" id="2.1.1.207"/>
    </reaction>
</comment>
<comment type="catalytic activity">
    <reaction evidence="1">
        <text>5-carboxymethylaminomethyluridine(34) in tRNA(Leu) + S-adenosyl-L-methionine = 5-carboxymethylaminomethyl-2'-O-methyluridine(34) in tRNA(Leu) + S-adenosyl-L-homocysteine + H(+)</text>
        <dbReference type="Rhea" id="RHEA:43088"/>
        <dbReference type="Rhea" id="RHEA-COMP:10333"/>
        <dbReference type="Rhea" id="RHEA-COMP:10334"/>
        <dbReference type="ChEBI" id="CHEBI:15378"/>
        <dbReference type="ChEBI" id="CHEBI:57856"/>
        <dbReference type="ChEBI" id="CHEBI:59789"/>
        <dbReference type="ChEBI" id="CHEBI:74508"/>
        <dbReference type="ChEBI" id="CHEBI:74511"/>
        <dbReference type="EC" id="2.1.1.207"/>
    </reaction>
</comment>
<comment type="subcellular location">
    <subcellularLocation>
        <location evidence="1">Cytoplasm</location>
    </subcellularLocation>
</comment>
<comment type="similarity">
    <text evidence="1">Belongs to the class IV-like SAM-binding methyltransferase superfamily. RNA methyltransferase TrmH family. TrmL subfamily.</text>
</comment>
<comment type="sequence caution" evidence="2">
    <conflict type="erroneous initiation">
        <sequence resource="EMBL-CDS" id="CAL97933"/>
    </conflict>
    <text>Extended N-terminus.</text>
</comment>
<feature type="chain" id="PRO_0000401947" description="Putative tRNA (cytidine(34)-2'-O)-methyltransferase">
    <location>
        <begin position="1"/>
        <end position="169"/>
    </location>
</feature>
<feature type="binding site" evidence="1">
    <location>
        <position position="79"/>
    </location>
    <ligand>
        <name>S-adenosyl-L-methionine</name>
        <dbReference type="ChEBI" id="CHEBI:59789"/>
    </ligand>
</feature>
<feature type="binding site" evidence="1">
    <location>
        <position position="104"/>
    </location>
    <ligand>
        <name>S-adenosyl-L-methionine</name>
        <dbReference type="ChEBI" id="CHEBI:59789"/>
    </ligand>
</feature>
<feature type="binding site" evidence="1">
    <location>
        <position position="125"/>
    </location>
    <ligand>
        <name>S-adenosyl-L-methionine</name>
        <dbReference type="ChEBI" id="CHEBI:59789"/>
    </ligand>
</feature>
<feature type="binding site" evidence="1">
    <location>
        <position position="134"/>
    </location>
    <ligand>
        <name>S-adenosyl-L-methionine</name>
        <dbReference type="ChEBI" id="CHEBI:59789"/>
    </ligand>
</feature>
<sequence length="169" mass="19825">MNHIALFEPRIHFNTGNIARTCAATNTVLHLIEPFGFEISDKHLKRAGLDYWDKVNIVYHKNLQDFMNSIADGGQLYLVSKFAEHVYSDVDYSDDKKDHYFLFGREDTGLPEEFMHEHRDECIRIPMNDEHVRSLNLSNCACMIVYEALKQQEFRGLELVHTYEKDKLK</sequence>
<organism>
    <name type="scientific">Lactococcus lactis subsp. cremoris (strain MG1363)</name>
    <dbReference type="NCBI Taxonomy" id="416870"/>
    <lineage>
        <taxon>Bacteria</taxon>
        <taxon>Bacillati</taxon>
        <taxon>Bacillota</taxon>
        <taxon>Bacilli</taxon>
        <taxon>Lactobacillales</taxon>
        <taxon>Streptococcaceae</taxon>
        <taxon>Lactococcus</taxon>
        <taxon>Lactococcus cremoris subsp. cremoris</taxon>
    </lineage>
</organism>
<gene>
    <name type="ordered locus">llmg_1343</name>
</gene>
<keyword id="KW-0963">Cytoplasm</keyword>
<keyword id="KW-0489">Methyltransferase</keyword>
<keyword id="KW-0949">S-adenosyl-L-methionine</keyword>
<keyword id="KW-0808">Transferase</keyword>
<keyword id="KW-0819">tRNA processing</keyword>
<dbReference type="EC" id="2.1.1.207" evidence="1"/>
<dbReference type="EMBL" id="AM406671">
    <property type="protein sequence ID" value="CAL97933.1"/>
    <property type="status" value="ALT_INIT"/>
    <property type="molecule type" value="Genomic_DNA"/>
</dbReference>
<dbReference type="RefSeq" id="WP_014735036.1">
    <property type="nucleotide sequence ID" value="NC_009004.1"/>
</dbReference>
<dbReference type="SMR" id="A2RKW7"/>
<dbReference type="STRING" id="416870.llmg_1343"/>
<dbReference type="KEGG" id="llm:llmg_1343"/>
<dbReference type="eggNOG" id="COG0219">
    <property type="taxonomic scope" value="Bacteria"/>
</dbReference>
<dbReference type="HOGENOM" id="CLU_110125_0_0_9"/>
<dbReference type="OrthoDB" id="9789043at2"/>
<dbReference type="Proteomes" id="UP000000364">
    <property type="component" value="Chromosome"/>
</dbReference>
<dbReference type="GO" id="GO:0005737">
    <property type="term" value="C:cytoplasm"/>
    <property type="evidence" value="ECO:0007669"/>
    <property type="project" value="UniProtKB-SubCell"/>
</dbReference>
<dbReference type="GO" id="GO:0003723">
    <property type="term" value="F:RNA binding"/>
    <property type="evidence" value="ECO:0007669"/>
    <property type="project" value="InterPro"/>
</dbReference>
<dbReference type="GO" id="GO:0141102">
    <property type="term" value="F:tRNA (5-carboxymethylaminomethyluridine(34)-2'-O)-methyltransferase activity"/>
    <property type="evidence" value="ECO:0007669"/>
    <property type="project" value="RHEA"/>
</dbReference>
<dbReference type="GO" id="GO:0141098">
    <property type="term" value="F:tRNA (cytidine(34)-2'-O)-methyltransferase activity"/>
    <property type="evidence" value="ECO:0007669"/>
    <property type="project" value="RHEA"/>
</dbReference>
<dbReference type="GO" id="GO:0002130">
    <property type="term" value="P:wobble position ribose methylation"/>
    <property type="evidence" value="ECO:0007669"/>
    <property type="project" value="TreeGrafter"/>
</dbReference>
<dbReference type="CDD" id="cd18094">
    <property type="entry name" value="SpoU-like_TrmL"/>
    <property type="match status" value="1"/>
</dbReference>
<dbReference type="FunFam" id="3.40.1280.10:FF:000002">
    <property type="entry name" value="Peptidylprolyl isomerase"/>
    <property type="match status" value="1"/>
</dbReference>
<dbReference type="Gene3D" id="3.40.1280.10">
    <property type="match status" value="1"/>
</dbReference>
<dbReference type="HAMAP" id="MF_01885">
    <property type="entry name" value="tRNA_methyltr_TrmL"/>
    <property type="match status" value="1"/>
</dbReference>
<dbReference type="InterPro" id="IPR029028">
    <property type="entry name" value="Alpha/beta_knot_MTases"/>
</dbReference>
<dbReference type="InterPro" id="IPR001537">
    <property type="entry name" value="SpoU_MeTrfase"/>
</dbReference>
<dbReference type="InterPro" id="IPR016914">
    <property type="entry name" value="TrmL"/>
</dbReference>
<dbReference type="InterPro" id="IPR029026">
    <property type="entry name" value="tRNA_m1G_MTases_N"/>
</dbReference>
<dbReference type="PANTHER" id="PTHR42971">
    <property type="entry name" value="TRNA (CYTIDINE(34)-2'-O)-METHYLTRANSFERASE"/>
    <property type="match status" value="1"/>
</dbReference>
<dbReference type="PANTHER" id="PTHR42971:SF1">
    <property type="entry name" value="TRNA (CYTIDINE(34)-2'-O)-METHYLTRANSFERASE"/>
    <property type="match status" value="1"/>
</dbReference>
<dbReference type="Pfam" id="PF00588">
    <property type="entry name" value="SpoU_methylase"/>
    <property type="match status" value="1"/>
</dbReference>
<dbReference type="PIRSF" id="PIRSF029256">
    <property type="entry name" value="SpoU_TrmH_prd"/>
    <property type="match status" value="1"/>
</dbReference>
<dbReference type="SUPFAM" id="SSF75217">
    <property type="entry name" value="alpha/beta knot"/>
    <property type="match status" value="1"/>
</dbReference>
<proteinExistence type="inferred from homology"/>
<name>TRML_LACLM</name>
<accession>A2RKW7</accession>
<evidence type="ECO:0000255" key="1">
    <source>
        <dbReference type="HAMAP-Rule" id="MF_01885"/>
    </source>
</evidence>
<evidence type="ECO:0000305" key="2"/>
<reference key="1">
    <citation type="journal article" date="2007" name="J. Bacteriol.">
        <title>The complete genome sequence of the lactic acid bacterial paradigm Lactococcus lactis subsp. cremoris MG1363.</title>
        <authorList>
            <person name="Wegmann U."/>
            <person name="O'Connell-Motherway M."/>
            <person name="Zomer A."/>
            <person name="Buist G."/>
            <person name="Shearman C."/>
            <person name="Canchaya C."/>
            <person name="Ventura M."/>
            <person name="Goesmann A."/>
            <person name="Gasson M.J."/>
            <person name="Kuipers O.P."/>
            <person name="van Sinderen D."/>
            <person name="Kok J."/>
        </authorList>
    </citation>
    <scope>NUCLEOTIDE SEQUENCE [LARGE SCALE GENOMIC DNA]</scope>
    <source>
        <strain>MG1363</strain>
    </source>
</reference>
<protein>
    <recommendedName>
        <fullName evidence="1">Putative tRNA (cytidine(34)-2'-O)-methyltransferase</fullName>
        <ecNumber evidence="1">2.1.1.207</ecNumber>
    </recommendedName>
    <alternativeName>
        <fullName evidence="1">tRNA (cytidine/uridine-2'-O-)-methyltransferase</fullName>
    </alternativeName>
</protein>